<sequence>MSHAAPAHKRILLKLSGEALMGSDAFGINHATIVRMVQEIAEVTRLGVQVAVVIGGGNIFRGVAGGAVGMDRATADYMGMLATVMNALALADAMNKQALVARVMSAIAIEQVVEPYVRPKALQYLEEGKVVIFAAGTGNPFFTTDTAAALRGAEIGAEVVLKATKVDGVYTADPQKDPTATRYAKLSFDEAMARNLGIMDATAFALCRDQRLPVRVFSIIKHGAFKRVVMGEDEGTLVYV</sequence>
<protein>
    <recommendedName>
        <fullName evidence="1">Uridylate kinase</fullName>
        <shortName evidence="1">UK</shortName>
        <ecNumber evidence="1">2.7.4.22</ecNumber>
    </recommendedName>
    <alternativeName>
        <fullName evidence="1">Uridine monophosphate kinase</fullName>
        <shortName evidence="1">UMP kinase</shortName>
        <shortName evidence="1">UMPK</shortName>
    </alternativeName>
</protein>
<reference key="1">
    <citation type="submission" date="2006-12" db="EMBL/GenBank/DDBJ databases">
        <title>Complete sequence of chromosome 1 of Verminephrobacter eiseniae EF01-2.</title>
        <authorList>
            <person name="Copeland A."/>
            <person name="Lucas S."/>
            <person name="Lapidus A."/>
            <person name="Barry K."/>
            <person name="Detter J.C."/>
            <person name="Glavina del Rio T."/>
            <person name="Dalin E."/>
            <person name="Tice H."/>
            <person name="Pitluck S."/>
            <person name="Chertkov O."/>
            <person name="Brettin T."/>
            <person name="Bruce D."/>
            <person name="Han C."/>
            <person name="Tapia R."/>
            <person name="Gilna P."/>
            <person name="Schmutz J."/>
            <person name="Larimer F."/>
            <person name="Land M."/>
            <person name="Hauser L."/>
            <person name="Kyrpides N."/>
            <person name="Kim E."/>
            <person name="Stahl D."/>
            <person name="Richardson P."/>
        </authorList>
    </citation>
    <scope>NUCLEOTIDE SEQUENCE [LARGE SCALE GENOMIC DNA]</scope>
    <source>
        <strain>EF01-2</strain>
    </source>
</reference>
<name>PYRH_VEREI</name>
<accession>A1WHU4</accession>
<gene>
    <name evidence="1" type="primary">pyrH</name>
    <name type="ordered locus">Veis_1440</name>
</gene>
<proteinExistence type="inferred from homology"/>
<keyword id="KW-0067">ATP-binding</keyword>
<keyword id="KW-0963">Cytoplasm</keyword>
<keyword id="KW-0418">Kinase</keyword>
<keyword id="KW-0547">Nucleotide-binding</keyword>
<keyword id="KW-0665">Pyrimidine biosynthesis</keyword>
<keyword id="KW-1185">Reference proteome</keyword>
<keyword id="KW-0808">Transferase</keyword>
<dbReference type="EC" id="2.7.4.22" evidence="1"/>
<dbReference type="EMBL" id="CP000542">
    <property type="protein sequence ID" value="ABM57201.1"/>
    <property type="molecule type" value="Genomic_DNA"/>
</dbReference>
<dbReference type="RefSeq" id="WP_011809208.1">
    <property type="nucleotide sequence ID" value="NC_008786.1"/>
</dbReference>
<dbReference type="SMR" id="A1WHU4"/>
<dbReference type="STRING" id="391735.Veis_1440"/>
<dbReference type="GeneID" id="76460065"/>
<dbReference type="KEGG" id="vei:Veis_1440"/>
<dbReference type="eggNOG" id="COG0528">
    <property type="taxonomic scope" value="Bacteria"/>
</dbReference>
<dbReference type="HOGENOM" id="CLU_033861_0_0_4"/>
<dbReference type="OrthoDB" id="9807458at2"/>
<dbReference type="UniPathway" id="UPA00159">
    <property type="reaction ID" value="UER00275"/>
</dbReference>
<dbReference type="Proteomes" id="UP000000374">
    <property type="component" value="Chromosome"/>
</dbReference>
<dbReference type="GO" id="GO:0005829">
    <property type="term" value="C:cytosol"/>
    <property type="evidence" value="ECO:0007669"/>
    <property type="project" value="TreeGrafter"/>
</dbReference>
<dbReference type="GO" id="GO:0005524">
    <property type="term" value="F:ATP binding"/>
    <property type="evidence" value="ECO:0007669"/>
    <property type="project" value="UniProtKB-KW"/>
</dbReference>
<dbReference type="GO" id="GO:0033862">
    <property type="term" value="F:UMP kinase activity"/>
    <property type="evidence" value="ECO:0007669"/>
    <property type="project" value="UniProtKB-EC"/>
</dbReference>
<dbReference type="GO" id="GO:0044210">
    <property type="term" value="P:'de novo' CTP biosynthetic process"/>
    <property type="evidence" value="ECO:0007669"/>
    <property type="project" value="UniProtKB-UniRule"/>
</dbReference>
<dbReference type="GO" id="GO:0006225">
    <property type="term" value="P:UDP biosynthetic process"/>
    <property type="evidence" value="ECO:0007669"/>
    <property type="project" value="TreeGrafter"/>
</dbReference>
<dbReference type="CDD" id="cd04254">
    <property type="entry name" value="AAK_UMPK-PyrH-Ec"/>
    <property type="match status" value="1"/>
</dbReference>
<dbReference type="FunFam" id="3.40.1160.10:FF:000001">
    <property type="entry name" value="Uridylate kinase"/>
    <property type="match status" value="1"/>
</dbReference>
<dbReference type="Gene3D" id="3.40.1160.10">
    <property type="entry name" value="Acetylglutamate kinase-like"/>
    <property type="match status" value="1"/>
</dbReference>
<dbReference type="HAMAP" id="MF_01220_B">
    <property type="entry name" value="PyrH_B"/>
    <property type="match status" value="1"/>
</dbReference>
<dbReference type="InterPro" id="IPR036393">
    <property type="entry name" value="AceGlu_kinase-like_sf"/>
</dbReference>
<dbReference type="InterPro" id="IPR001048">
    <property type="entry name" value="Asp/Glu/Uridylate_kinase"/>
</dbReference>
<dbReference type="InterPro" id="IPR011817">
    <property type="entry name" value="Uridylate_kinase"/>
</dbReference>
<dbReference type="InterPro" id="IPR015963">
    <property type="entry name" value="Uridylate_kinase_bac"/>
</dbReference>
<dbReference type="NCBIfam" id="TIGR02075">
    <property type="entry name" value="pyrH_bact"/>
    <property type="match status" value="1"/>
</dbReference>
<dbReference type="PANTHER" id="PTHR42833">
    <property type="entry name" value="URIDYLATE KINASE"/>
    <property type="match status" value="1"/>
</dbReference>
<dbReference type="PANTHER" id="PTHR42833:SF4">
    <property type="entry name" value="URIDYLATE KINASE PUMPKIN, CHLOROPLASTIC"/>
    <property type="match status" value="1"/>
</dbReference>
<dbReference type="Pfam" id="PF00696">
    <property type="entry name" value="AA_kinase"/>
    <property type="match status" value="1"/>
</dbReference>
<dbReference type="PIRSF" id="PIRSF005650">
    <property type="entry name" value="Uridylate_kin"/>
    <property type="match status" value="1"/>
</dbReference>
<dbReference type="SUPFAM" id="SSF53633">
    <property type="entry name" value="Carbamate kinase-like"/>
    <property type="match status" value="1"/>
</dbReference>
<comment type="function">
    <text evidence="1">Catalyzes the reversible phosphorylation of UMP to UDP.</text>
</comment>
<comment type="catalytic activity">
    <reaction evidence="1">
        <text>UMP + ATP = UDP + ADP</text>
        <dbReference type="Rhea" id="RHEA:24400"/>
        <dbReference type="ChEBI" id="CHEBI:30616"/>
        <dbReference type="ChEBI" id="CHEBI:57865"/>
        <dbReference type="ChEBI" id="CHEBI:58223"/>
        <dbReference type="ChEBI" id="CHEBI:456216"/>
        <dbReference type="EC" id="2.7.4.22"/>
    </reaction>
</comment>
<comment type="activity regulation">
    <text evidence="1">Inhibited by UTP.</text>
</comment>
<comment type="pathway">
    <text evidence="1">Pyrimidine metabolism; CTP biosynthesis via de novo pathway; UDP from UMP (UMPK route): step 1/1.</text>
</comment>
<comment type="subunit">
    <text evidence="1">Homohexamer.</text>
</comment>
<comment type="subcellular location">
    <subcellularLocation>
        <location evidence="1">Cytoplasm</location>
    </subcellularLocation>
</comment>
<comment type="similarity">
    <text evidence="1">Belongs to the UMP kinase family.</text>
</comment>
<feature type="chain" id="PRO_0000323980" description="Uridylate kinase">
    <location>
        <begin position="1"/>
        <end position="240"/>
    </location>
</feature>
<feature type="binding site" evidence="1">
    <location>
        <begin position="14"/>
        <end position="17"/>
    </location>
    <ligand>
        <name>ATP</name>
        <dbReference type="ChEBI" id="CHEBI:30616"/>
    </ligand>
</feature>
<feature type="binding site" evidence="1">
    <location>
        <position position="56"/>
    </location>
    <ligand>
        <name>UMP</name>
        <dbReference type="ChEBI" id="CHEBI:57865"/>
    </ligand>
</feature>
<feature type="binding site" evidence="1">
    <location>
        <position position="57"/>
    </location>
    <ligand>
        <name>ATP</name>
        <dbReference type="ChEBI" id="CHEBI:30616"/>
    </ligand>
</feature>
<feature type="binding site" evidence="1">
    <location>
        <position position="61"/>
    </location>
    <ligand>
        <name>ATP</name>
        <dbReference type="ChEBI" id="CHEBI:30616"/>
    </ligand>
</feature>
<feature type="binding site" evidence="1">
    <location>
        <position position="76"/>
    </location>
    <ligand>
        <name>UMP</name>
        <dbReference type="ChEBI" id="CHEBI:57865"/>
    </ligand>
</feature>
<feature type="binding site" evidence="1">
    <location>
        <begin position="137"/>
        <end position="144"/>
    </location>
    <ligand>
        <name>UMP</name>
        <dbReference type="ChEBI" id="CHEBI:57865"/>
    </ligand>
</feature>
<feature type="binding site" evidence="1">
    <location>
        <position position="164"/>
    </location>
    <ligand>
        <name>ATP</name>
        <dbReference type="ChEBI" id="CHEBI:30616"/>
    </ligand>
</feature>
<feature type="binding site" evidence="1">
    <location>
        <position position="170"/>
    </location>
    <ligand>
        <name>ATP</name>
        <dbReference type="ChEBI" id="CHEBI:30616"/>
    </ligand>
</feature>
<feature type="binding site" evidence="1">
    <location>
        <position position="173"/>
    </location>
    <ligand>
        <name>ATP</name>
        <dbReference type="ChEBI" id="CHEBI:30616"/>
    </ligand>
</feature>
<organism>
    <name type="scientific">Verminephrobacter eiseniae (strain EF01-2)</name>
    <dbReference type="NCBI Taxonomy" id="391735"/>
    <lineage>
        <taxon>Bacteria</taxon>
        <taxon>Pseudomonadati</taxon>
        <taxon>Pseudomonadota</taxon>
        <taxon>Betaproteobacteria</taxon>
        <taxon>Burkholderiales</taxon>
        <taxon>Comamonadaceae</taxon>
        <taxon>Verminephrobacter</taxon>
    </lineage>
</organism>
<evidence type="ECO:0000255" key="1">
    <source>
        <dbReference type="HAMAP-Rule" id="MF_01220"/>
    </source>
</evidence>